<proteinExistence type="inferred from homology"/>
<accession>Q39PQ8</accession>
<gene>
    <name evidence="1" type="primary">yidC</name>
    <name type="ordered locus">Gmet_3561</name>
</gene>
<keyword id="KW-0997">Cell inner membrane</keyword>
<keyword id="KW-1003">Cell membrane</keyword>
<keyword id="KW-0143">Chaperone</keyword>
<keyword id="KW-0472">Membrane</keyword>
<keyword id="KW-0653">Protein transport</keyword>
<keyword id="KW-1185">Reference proteome</keyword>
<keyword id="KW-0812">Transmembrane</keyword>
<keyword id="KW-1133">Transmembrane helix</keyword>
<keyword id="KW-0813">Transport</keyword>
<protein>
    <recommendedName>
        <fullName evidence="1">Membrane protein insertase YidC</fullName>
    </recommendedName>
    <alternativeName>
        <fullName evidence="1">Foldase YidC</fullName>
    </alternativeName>
    <alternativeName>
        <fullName evidence="1">Membrane integrase YidC</fullName>
    </alternativeName>
    <alternativeName>
        <fullName evidence="1">Membrane protein YidC</fullName>
    </alternativeName>
</protein>
<evidence type="ECO:0000255" key="1">
    <source>
        <dbReference type="HAMAP-Rule" id="MF_01810"/>
    </source>
</evidence>
<evidence type="ECO:0000256" key="2">
    <source>
        <dbReference type="SAM" id="MobiDB-lite"/>
    </source>
</evidence>
<sequence length="536" mass="58996">MEKRALIAVILSIVFFYGYSALFPPPKKEAPAPSAQQAVTGSQPGAPQASVAAVPAPSPVPAAAVKAQQKEIAVETPDYTAVFSTQGGSLTRLVLKKYRETADLTGKHVTLVDERDPSAYTLSTRAAGIGLDPSALFVSSADSLTVEAGEEKKELAFTWISPAGVTVRKIYTFQGGNYGIDMVYQTANSGTARVGAAFQTVMTYPAVPRVKESRLETFGPVTFAQDKLTEEKVKDLVGQGKSYSAPLWSGFADKYFLSAVVGQGGSIATAAVRSTPRGMLEDTITAPETSLNPGESKSVAYRLYFGPKDLDILKAQGNSLERAIDLGWFAMLAKPLLHSLKFFYKYVHNYGIAIIIITVILKIIFYPLTHSSYKSMKQMQKLQPKMQEVREKYKNDRDAMNKAIMELYQTHKVNPVGGCLPMLVQIPVFFALYKALMFSIELRHAPFMLWIQDLAGKDPYYVTPIIMGITMVIQQKMTPSQMDPMQQKMMMALPVVFTFMFLNFPSGLVLYWLVNNVLTIIQQSYINKSIAAAEAK</sequence>
<comment type="function">
    <text evidence="1">Required for the insertion and/or proper folding and/or complex formation of integral membrane proteins into the membrane. Involved in integration of membrane proteins that insert both dependently and independently of the Sec translocase complex, as well as at least some lipoproteins. Aids folding of multispanning membrane proteins.</text>
</comment>
<comment type="subunit">
    <text evidence="1">Interacts with the Sec translocase complex via SecD. Specifically interacts with transmembrane segments of nascent integral membrane proteins during membrane integration.</text>
</comment>
<comment type="subcellular location">
    <subcellularLocation>
        <location evidence="1">Cell inner membrane</location>
        <topology evidence="1">Multi-pass membrane protein</topology>
    </subcellularLocation>
</comment>
<comment type="similarity">
    <text evidence="1">Belongs to the OXA1/ALB3/YidC family. Type 1 subfamily.</text>
</comment>
<name>YIDC_GEOMG</name>
<organism>
    <name type="scientific">Geobacter metallireducens (strain ATCC 53774 / DSM 7210 / GS-15)</name>
    <dbReference type="NCBI Taxonomy" id="269799"/>
    <lineage>
        <taxon>Bacteria</taxon>
        <taxon>Pseudomonadati</taxon>
        <taxon>Thermodesulfobacteriota</taxon>
        <taxon>Desulfuromonadia</taxon>
        <taxon>Geobacterales</taxon>
        <taxon>Geobacteraceae</taxon>
        <taxon>Geobacter</taxon>
    </lineage>
</organism>
<feature type="chain" id="PRO_1000070100" description="Membrane protein insertase YidC">
    <location>
        <begin position="1"/>
        <end position="536"/>
    </location>
</feature>
<feature type="transmembrane region" description="Helical" evidence="1">
    <location>
        <begin position="5"/>
        <end position="25"/>
    </location>
</feature>
<feature type="transmembrane region" description="Helical" evidence="1">
    <location>
        <begin position="350"/>
        <end position="370"/>
    </location>
</feature>
<feature type="transmembrane region" description="Helical" evidence="1">
    <location>
        <begin position="420"/>
        <end position="440"/>
    </location>
</feature>
<feature type="transmembrane region" description="Helical" evidence="1">
    <location>
        <begin position="454"/>
        <end position="474"/>
    </location>
</feature>
<feature type="transmembrane region" description="Helical" evidence="1">
    <location>
        <begin position="494"/>
        <end position="514"/>
    </location>
</feature>
<feature type="region of interest" description="Disordered" evidence="2">
    <location>
        <begin position="30"/>
        <end position="54"/>
    </location>
</feature>
<feature type="compositionally biased region" description="Low complexity" evidence="2">
    <location>
        <begin position="31"/>
        <end position="54"/>
    </location>
</feature>
<dbReference type="EMBL" id="CP000148">
    <property type="protein sequence ID" value="ABB33766.1"/>
    <property type="molecule type" value="Genomic_DNA"/>
</dbReference>
<dbReference type="RefSeq" id="WP_004513717.1">
    <property type="nucleotide sequence ID" value="NC_007517.1"/>
</dbReference>
<dbReference type="SMR" id="Q39PQ8"/>
<dbReference type="STRING" id="269799.Gmet_3561"/>
<dbReference type="KEGG" id="gme:Gmet_3561"/>
<dbReference type="eggNOG" id="COG0706">
    <property type="taxonomic scope" value="Bacteria"/>
</dbReference>
<dbReference type="HOGENOM" id="CLU_016535_3_0_7"/>
<dbReference type="Proteomes" id="UP000007073">
    <property type="component" value="Chromosome"/>
</dbReference>
<dbReference type="GO" id="GO:0005886">
    <property type="term" value="C:plasma membrane"/>
    <property type="evidence" value="ECO:0007669"/>
    <property type="project" value="UniProtKB-SubCell"/>
</dbReference>
<dbReference type="GO" id="GO:0032977">
    <property type="term" value="F:membrane insertase activity"/>
    <property type="evidence" value="ECO:0007669"/>
    <property type="project" value="InterPro"/>
</dbReference>
<dbReference type="GO" id="GO:0051205">
    <property type="term" value="P:protein insertion into membrane"/>
    <property type="evidence" value="ECO:0007669"/>
    <property type="project" value="TreeGrafter"/>
</dbReference>
<dbReference type="GO" id="GO:0015031">
    <property type="term" value="P:protein transport"/>
    <property type="evidence" value="ECO:0007669"/>
    <property type="project" value="UniProtKB-KW"/>
</dbReference>
<dbReference type="CDD" id="cd20070">
    <property type="entry name" value="5TM_YidC_Alb3"/>
    <property type="match status" value="1"/>
</dbReference>
<dbReference type="CDD" id="cd19961">
    <property type="entry name" value="EcYidC-like_peri"/>
    <property type="match status" value="1"/>
</dbReference>
<dbReference type="Gene3D" id="2.70.98.90">
    <property type="match status" value="1"/>
</dbReference>
<dbReference type="HAMAP" id="MF_01810">
    <property type="entry name" value="YidC_type1"/>
    <property type="match status" value="1"/>
</dbReference>
<dbReference type="InterPro" id="IPR019998">
    <property type="entry name" value="Membr_insert_YidC"/>
</dbReference>
<dbReference type="InterPro" id="IPR028053">
    <property type="entry name" value="Membr_insert_YidC_N"/>
</dbReference>
<dbReference type="InterPro" id="IPR001708">
    <property type="entry name" value="YidC/ALB3/OXA1/COX18"/>
</dbReference>
<dbReference type="InterPro" id="IPR028055">
    <property type="entry name" value="YidC/Oxa/ALB_C"/>
</dbReference>
<dbReference type="InterPro" id="IPR047196">
    <property type="entry name" value="YidC_ALB_C"/>
</dbReference>
<dbReference type="InterPro" id="IPR038221">
    <property type="entry name" value="YidC_periplasmic_sf"/>
</dbReference>
<dbReference type="NCBIfam" id="NF002352">
    <property type="entry name" value="PRK01318.1-3"/>
    <property type="match status" value="1"/>
</dbReference>
<dbReference type="NCBIfam" id="TIGR03593">
    <property type="entry name" value="yidC_nterm"/>
    <property type="match status" value="1"/>
</dbReference>
<dbReference type="NCBIfam" id="TIGR03592">
    <property type="entry name" value="yidC_oxa1_cterm"/>
    <property type="match status" value="1"/>
</dbReference>
<dbReference type="PANTHER" id="PTHR12428:SF65">
    <property type="entry name" value="CYTOCHROME C OXIDASE ASSEMBLY PROTEIN COX18, MITOCHONDRIAL"/>
    <property type="match status" value="1"/>
</dbReference>
<dbReference type="PANTHER" id="PTHR12428">
    <property type="entry name" value="OXA1"/>
    <property type="match status" value="1"/>
</dbReference>
<dbReference type="Pfam" id="PF02096">
    <property type="entry name" value="60KD_IMP"/>
    <property type="match status" value="1"/>
</dbReference>
<dbReference type="Pfam" id="PF14849">
    <property type="entry name" value="YidC_periplas"/>
    <property type="match status" value="1"/>
</dbReference>
<dbReference type="PRINTS" id="PR00701">
    <property type="entry name" value="60KDINNERMP"/>
</dbReference>
<dbReference type="PRINTS" id="PR01900">
    <property type="entry name" value="YIDCPROTEIN"/>
</dbReference>
<reference key="1">
    <citation type="journal article" date="2009" name="BMC Microbiol.">
        <title>The genome sequence of Geobacter metallireducens: features of metabolism, physiology and regulation common and dissimilar to Geobacter sulfurreducens.</title>
        <authorList>
            <person name="Aklujkar M."/>
            <person name="Krushkal J."/>
            <person name="DiBartolo G."/>
            <person name="Lapidus A."/>
            <person name="Land M.L."/>
            <person name="Lovley D.R."/>
        </authorList>
    </citation>
    <scope>NUCLEOTIDE SEQUENCE [LARGE SCALE GENOMIC DNA]</scope>
    <source>
        <strain>ATCC 53774 / DSM 7210 / GS-15</strain>
    </source>
</reference>